<protein>
    <recommendedName>
        <fullName evidence="1">Non-structural glycoprotein 4</fullName>
        <shortName evidence="1">NSP4</shortName>
    </recommendedName>
    <alternativeName>
        <fullName evidence="1">NCVP5</fullName>
    </alternativeName>
    <alternativeName>
        <fullName evidence="1">NS28</fullName>
    </alternativeName>
</protein>
<sequence length="175" mass="20332">MEKLTDLNYTLSVITLMNNTLHTILEDPGMAYFPYIASVLTVLFALHKASIPTMKIALKTSKCSYKVVKYCIVTIFNTLLKLAGYKEQITTKDEIEKQMDRVVKEMRRQLEMIDKLTTREIEQVELLKRIYDKLTVQTTGEIDMTKEINQKNVRTLEEWESGKNPYEPREVTAAM</sequence>
<accession>A2T3Q0</accession>
<name>NSP4_ROTSH</name>
<organism>
    <name type="scientific">Rotavirus A (isolate RVA/Monkey/South Africa/SA11-H96/1958/G3P5B[2])</name>
    <name type="common">RV-A</name>
    <name type="synonym">Simian Agent 11 (isolate SI/South Africa/H96/58)</name>
    <dbReference type="NCBI Taxonomy" id="450149"/>
    <lineage>
        <taxon>Viruses</taxon>
        <taxon>Riboviria</taxon>
        <taxon>Orthornavirae</taxon>
        <taxon>Duplornaviricota</taxon>
        <taxon>Resentoviricetes</taxon>
        <taxon>Reovirales</taxon>
        <taxon>Sedoreoviridae</taxon>
        <taxon>Rotavirus</taxon>
        <taxon>Rotavirus A</taxon>
    </lineage>
</organism>
<dbReference type="EMBL" id="DQ838625">
    <property type="protein sequence ID" value="ABG75799.1"/>
    <property type="molecule type" value="Genomic_RNA"/>
</dbReference>
<dbReference type="RefSeq" id="YP_002302223.1">
    <property type="nucleotide sequence ID" value="NC_011504.2"/>
</dbReference>
<dbReference type="SMR" id="A2T3Q0"/>
<dbReference type="GeneID" id="7011361"/>
<dbReference type="KEGG" id="vg:7011361"/>
<dbReference type="Proteomes" id="UP000001119">
    <property type="component" value="Genome"/>
</dbReference>
<dbReference type="GO" id="GO:0005576">
    <property type="term" value="C:extracellular region"/>
    <property type="evidence" value="ECO:0007669"/>
    <property type="project" value="UniProtKB-SubCell"/>
</dbReference>
<dbReference type="GO" id="GO:0044155">
    <property type="term" value="C:host caveola"/>
    <property type="evidence" value="ECO:0007669"/>
    <property type="project" value="UniProtKB-SubCell"/>
</dbReference>
<dbReference type="GO" id="GO:0044169">
    <property type="term" value="C:host cell rough endoplasmic reticulum membrane"/>
    <property type="evidence" value="ECO:0007669"/>
    <property type="project" value="UniProtKB-SubCell"/>
</dbReference>
<dbReference type="GO" id="GO:0016020">
    <property type="term" value="C:membrane"/>
    <property type="evidence" value="ECO:0007669"/>
    <property type="project" value="UniProtKB-UniRule"/>
</dbReference>
<dbReference type="GO" id="GO:0015267">
    <property type="term" value="F:channel activity"/>
    <property type="evidence" value="ECO:0007669"/>
    <property type="project" value="UniProtKB-KW"/>
</dbReference>
<dbReference type="GO" id="GO:0046872">
    <property type="term" value="F:metal ion binding"/>
    <property type="evidence" value="ECO:0007669"/>
    <property type="project" value="UniProtKB-UniRule"/>
</dbReference>
<dbReference type="GO" id="GO:0090729">
    <property type="term" value="F:toxin activity"/>
    <property type="evidence" value="ECO:0007669"/>
    <property type="project" value="UniProtKB-UniRule"/>
</dbReference>
<dbReference type="GO" id="GO:0034220">
    <property type="term" value="P:monoatomic ion transmembrane transport"/>
    <property type="evidence" value="ECO:0007669"/>
    <property type="project" value="UniProtKB-KW"/>
</dbReference>
<dbReference type="GO" id="GO:0039520">
    <property type="term" value="P:symbiont-mediated activation of host autophagy"/>
    <property type="evidence" value="ECO:0007669"/>
    <property type="project" value="UniProtKB-KW"/>
</dbReference>
<dbReference type="GO" id="GO:0046762">
    <property type="term" value="P:viral budding from endoplasmic reticulum membrane"/>
    <property type="evidence" value="ECO:0000314"/>
    <property type="project" value="UniProtKB"/>
</dbReference>
<dbReference type="FunFam" id="1.20.5.430:FF:000005">
    <property type="entry name" value="Non-structural glycoprotein 4"/>
    <property type="match status" value="1"/>
</dbReference>
<dbReference type="Gene3D" id="1.20.5.430">
    <property type="match status" value="1"/>
</dbReference>
<dbReference type="HAMAP" id="MF_04091">
    <property type="entry name" value="ROTA_NSP4"/>
    <property type="match status" value="1"/>
</dbReference>
<dbReference type="InterPro" id="IPR002107">
    <property type="entry name" value="Rotavirus_NSP4"/>
</dbReference>
<dbReference type="Pfam" id="PF01452">
    <property type="entry name" value="Rota_NSP4"/>
    <property type="match status" value="1"/>
</dbReference>
<dbReference type="SUPFAM" id="SSF58030">
    <property type="entry name" value="Rotavirus nonstructural proteins"/>
    <property type="match status" value="1"/>
</dbReference>
<proteinExistence type="inferred from homology"/>
<feature type="chain" id="PRO_0000369470" description="Non-structural glycoprotein 4">
    <location>
        <begin position="1"/>
        <end position="175"/>
    </location>
</feature>
<feature type="topological domain" description="Lumenal" evidence="1">
    <location>
        <begin position="1"/>
        <end position="28"/>
    </location>
</feature>
<feature type="transmembrane region" description="Helical; Signal-anchor for type III membrane protein" evidence="1">
    <location>
        <begin position="29"/>
        <end position="51"/>
    </location>
</feature>
<feature type="topological domain" description="Cytoplasmic" evidence="1">
    <location>
        <begin position="52"/>
        <end position="175"/>
    </location>
</feature>
<feature type="binding site" evidence="1">
    <location>
        <position position="120"/>
    </location>
    <ligand>
        <name>Ca(2+)</name>
        <dbReference type="ChEBI" id="CHEBI:29108"/>
    </ligand>
</feature>
<feature type="binding site" evidence="1">
    <location>
        <position position="123"/>
    </location>
    <ligand>
        <name>Ca(2+)</name>
        <dbReference type="ChEBI" id="CHEBI:29108"/>
    </ligand>
</feature>
<feature type="glycosylation site" description="N-linked (GlcNAc...) asparagine; by host" evidence="1">
    <location>
        <position position="8"/>
    </location>
</feature>
<feature type="glycosylation site" description="N-linked (GlcNAc...) asparagine; by host" evidence="1">
    <location>
        <position position="18"/>
    </location>
</feature>
<reference key="1">
    <citation type="journal article" date="2007" name="Virology">
        <title>Genome heterogeneity of SA11 rotavirus due to reassortment with 'O' agent.</title>
        <authorList>
            <person name="Small C."/>
            <person name="Barro M."/>
            <person name="Brown T.L."/>
            <person name="Patton J.T."/>
        </authorList>
    </citation>
    <scope>NUCLEOTIDE SEQUENCE [GENOMIC RNA]</scope>
</reference>
<organismHost>
    <name type="scientific">Chlorocebus pygerythrus</name>
    <name type="common">Vervet monkey</name>
    <name type="synonym">Cercopithecus pygerythrus</name>
    <dbReference type="NCBI Taxonomy" id="60710"/>
</organismHost>
<keyword id="KW-1072">Activation of host autophagy by virus</keyword>
<keyword id="KW-0106">Calcium</keyword>
<keyword id="KW-0260">Enterotoxin</keyword>
<keyword id="KW-0325">Glycoprotein</keyword>
<keyword id="KW-1038">Host endoplasmic reticulum</keyword>
<keyword id="KW-1043">Host membrane</keyword>
<keyword id="KW-0945">Host-virus interaction</keyword>
<keyword id="KW-0407">Ion channel</keyword>
<keyword id="KW-0406">Ion transport</keyword>
<keyword id="KW-0472">Membrane</keyword>
<keyword id="KW-0479">Metal-binding</keyword>
<keyword id="KW-1185">Reference proteome</keyword>
<keyword id="KW-0964">Secreted</keyword>
<keyword id="KW-0735">Signal-anchor</keyword>
<keyword id="KW-0800">Toxin</keyword>
<keyword id="KW-0812">Transmembrane</keyword>
<keyword id="KW-1133">Transmembrane helix</keyword>
<keyword id="KW-0813">Transport</keyword>
<keyword id="KW-1182">Viral ion channel</keyword>
<keyword id="KW-0843">Virulence</keyword>
<evidence type="ECO:0000255" key="1">
    <source>
        <dbReference type="HAMAP-Rule" id="MF_04091"/>
    </source>
</evidence>
<comment type="function">
    <text evidence="1">Plays an essential role in the virus replication cycle by acting as a viroporin. Creates a pore in the host endoplasmic reticulum and as a consequence releases Ca(2+) in the cytoplasm of infected cell. In turn, high levels of cytoplasmic calcium trigger membrane trafficking and transport of viral ER-associated proteins to viroplasms, sites of viral genome replication and immature particle assembly.</text>
</comment>
<comment type="function">
    <text evidence="1">The secreted form acts as an enterotoxin that causes phospholipase C-dependent elevation of the intracellular calcium concentration in host intestinal mucosa cells. Increased concentration of intracellular calcium disrupts the cytoskeleton and the tight junctions, raising the paracellular permeability. Potentiates chloride ion secretion through a calcium ion-dependent signaling pathway, inducing age-dependent diarrhea. To perform this enterotoxigenic role in vivo, NSP4 is released from infected enterocytes in a soluble form capable of diffusing within the intestinal lumen and interacting with host plasma membrane receptors on neighboring epithelial cells such as integrins ITGA1/ITGB1 and ITGA2/ITGB1.</text>
</comment>
<comment type="subunit">
    <text evidence="1">Homotetramer. Interacts with the immature particle in the viroplasm. Interacts with host CAV1, early and late in infection. Interacts with host integrin ITGA1/ITGB1 heterodimer. Interacts with host integrin ITGA2/ITGB1 heterodimer. Interaction with microtubules blocks trafficking to the Golgi apparatus.</text>
</comment>
<comment type="subcellular location">
    <subcellularLocation>
        <location evidence="1">Host rough endoplasmic reticulum membrane</location>
        <topology evidence="1">Single-pass type III membrane protein</topology>
    </subcellularLocation>
    <subcellularLocation>
        <location evidence="1">Host membrane</location>
        <location evidence="1">Host caveola</location>
        <topology evidence="1">Single-pass type III membrane protein</topology>
    </subcellularLocation>
    <subcellularLocation>
        <location evidence="1">Secreted</location>
    </subcellularLocation>
    <text evidence="1">NSP4 also localizes in vesicular structures which contain autophagosomal markers and associate with viroplasms in virus-infected cells. Additionally, a soluble form of glycosylated NSP4 is secreted despite retention of its transmembrane domain.</text>
</comment>
<comment type="domain">
    <text evidence="1">Binds 1 calcium ion per tetramer.</text>
</comment>
<comment type="PTM">
    <text evidence="1">The N-glycosyl content is primarily Man(9)GlcNAc, with a small amount of Man(8)GlcNAc.</text>
</comment>
<comment type="similarity">
    <text evidence="1">Belongs to the rotavirus NSP4 family.</text>
</comment>